<gene>
    <name type="primary">AOX2</name>
</gene>
<name>AOX2_TOBAC</name>
<keyword id="KW-1015">Disulfide bond</keyword>
<keyword id="KW-0249">Electron transport</keyword>
<keyword id="KW-0408">Iron</keyword>
<keyword id="KW-0472">Membrane</keyword>
<keyword id="KW-0479">Metal-binding</keyword>
<keyword id="KW-0496">Mitochondrion</keyword>
<keyword id="KW-0999">Mitochondrion inner membrane</keyword>
<keyword id="KW-0560">Oxidoreductase</keyword>
<keyword id="KW-1185">Reference proteome</keyword>
<keyword id="KW-0679">Respiratory chain</keyword>
<keyword id="KW-0809">Transit peptide</keyword>
<keyword id="KW-0812">Transmembrane</keyword>
<keyword id="KW-1133">Transmembrane helix</keyword>
<keyword id="KW-0813">Transport</keyword>
<reference key="1">
    <citation type="journal article" date="1995" name="Plant Physiol.">
        <title>Cloning of an additional cDNA for the alternative oxidase in tobacco.</title>
        <authorList>
            <person name="Whelan J."/>
            <person name="Smith M.K."/>
            <person name="Meijer M."/>
            <person name="Yu J.W."/>
            <person name="Badger M.R."/>
            <person name="Price G.D."/>
            <person name="Day D.A."/>
        </authorList>
    </citation>
    <scope>NUCLEOTIDE SEQUENCE [MRNA]</scope>
    <source>
        <strain>cv. SR1</strain>
    </source>
</reference>
<reference key="2">
    <citation type="journal article" date="1999" name="FEBS Lett.">
        <title>A revised model of the active site of alternative oxidase.</title>
        <authorList>
            <person name="Andersson M.E."/>
            <person name="Nordlund P."/>
        </authorList>
    </citation>
    <scope>IRON-BINDING SITES</scope>
</reference>
<organism>
    <name type="scientific">Nicotiana tabacum</name>
    <name type="common">Common tobacco</name>
    <dbReference type="NCBI Taxonomy" id="4097"/>
    <lineage>
        <taxon>Eukaryota</taxon>
        <taxon>Viridiplantae</taxon>
        <taxon>Streptophyta</taxon>
        <taxon>Embryophyta</taxon>
        <taxon>Tracheophyta</taxon>
        <taxon>Spermatophyta</taxon>
        <taxon>Magnoliopsida</taxon>
        <taxon>eudicotyledons</taxon>
        <taxon>Gunneridae</taxon>
        <taxon>Pentapetalae</taxon>
        <taxon>asterids</taxon>
        <taxon>lamiids</taxon>
        <taxon>Solanales</taxon>
        <taxon>Solanaceae</taxon>
        <taxon>Nicotianoideae</taxon>
        <taxon>Nicotianeae</taxon>
        <taxon>Nicotiana</taxon>
    </lineage>
</organism>
<dbReference type="EC" id="1.10.3.11"/>
<dbReference type="EMBL" id="X79768">
    <property type="protein sequence ID" value="CAA56163.1"/>
    <property type="molecule type" value="mRNA"/>
</dbReference>
<dbReference type="PIR" id="S51278">
    <property type="entry name" value="S51278"/>
</dbReference>
<dbReference type="RefSeq" id="NP_001312251.1">
    <property type="nucleotide sequence ID" value="NM_001325322.1"/>
</dbReference>
<dbReference type="SMR" id="Q40578"/>
<dbReference type="STRING" id="4097.Q40578"/>
<dbReference type="PaxDb" id="4097-Q40578"/>
<dbReference type="GeneID" id="107781761"/>
<dbReference type="KEGG" id="nta:107781761"/>
<dbReference type="OrthoDB" id="16906at2759"/>
<dbReference type="Proteomes" id="UP000084051">
    <property type="component" value="Unplaced"/>
</dbReference>
<dbReference type="GO" id="GO:0005743">
    <property type="term" value="C:mitochondrial inner membrane"/>
    <property type="evidence" value="ECO:0007669"/>
    <property type="project" value="UniProtKB-SubCell"/>
</dbReference>
<dbReference type="GO" id="GO:0005739">
    <property type="term" value="C:mitochondrion"/>
    <property type="evidence" value="ECO:0000318"/>
    <property type="project" value="GO_Central"/>
</dbReference>
<dbReference type="GO" id="GO:0009916">
    <property type="term" value="F:alternative oxidase activity"/>
    <property type="evidence" value="ECO:0000318"/>
    <property type="project" value="GO_Central"/>
</dbReference>
<dbReference type="GO" id="GO:0046872">
    <property type="term" value="F:metal ion binding"/>
    <property type="evidence" value="ECO:0007669"/>
    <property type="project" value="UniProtKB-KW"/>
</dbReference>
<dbReference type="GO" id="GO:0106292">
    <property type="term" value="F:superoxide-generating NADPH oxidase activity"/>
    <property type="evidence" value="ECO:0007669"/>
    <property type="project" value="UniProtKB-ARBA"/>
</dbReference>
<dbReference type="GO" id="GO:0102721">
    <property type="term" value="F:ubiquinol:oxygen oxidoreductase activity"/>
    <property type="evidence" value="ECO:0007669"/>
    <property type="project" value="UniProtKB-EC"/>
</dbReference>
<dbReference type="GO" id="GO:0010230">
    <property type="term" value="P:alternative respiration"/>
    <property type="evidence" value="ECO:0000318"/>
    <property type="project" value="GO_Central"/>
</dbReference>
<dbReference type="CDD" id="cd01053">
    <property type="entry name" value="AOX"/>
    <property type="match status" value="1"/>
</dbReference>
<dbReference type="FunFam" id="1.20.1260.140:FF:000001">
    <property type="entry name" value="Ubiquinol oxidase"/>
    <property type="match status" value="1"/>
</dbReference>
<dbReference type="Gene3D" id="1.20.1260.140">
    <property type="entry name" value="Alternative oxidase"/>
    <property type="match status" value="1"/>
</dbReference>
<dbReference type="InterPro" id="IPR002680">
    <property type="entry name" value="AOX"/>
</dbReference>
<dbReference type="InterPro" id="IPR038659">
    <property type="entry name" value="AOX_sf"/>
</dbReference>
<dbReference type="PANTHER" id="PTHR31803">
    <property type="entry name" value="ALTERNATIVE OXIDASE"/>
    <property type="match status" value="1"/>
</dbReference>
<dbReference type="PANTHER" id="PTHR31803:SF3">
    <property type="entry name" value="ALTERNATIVE OXIDASE"/>
    <property type="match status" value="1"/>
</dbReference>
<dbReference type="Pfam" id="PF01786">
    <property type="entry name" value="AOX"/>
    <property type="match status" value="1"/>
</dbReference>
<protein>
    <recommendedName>
        <fullName>Ubiquinol oxidase 2, mitochondrial</fullName>
        <ecNumber>1.10.3.11</ecNumber>
    </recommendedName>
    <alternativeName>
        <fullName>Alternative oxidase 2</fullName>
    </alternativeName>
</protein>
<evidence type="ECO:0000250" key="1"/>
<evidence type="ECO:0000250" key="2">
    <source>
        <dbReference type="UniProtKB" id="Q26710"/>
    </source>
</evidence>
<evidence type="ECO:0000250" key="3">
    <source>
        <dbReference type="UniProtKB" id="Q39219"/>
    </source>
</evidence>
<evidence type="ECO:0000250" key="4">
    <source>
        <dbReference type="UniProtKB" id="Q41224"/>
    </source>
</evidence>
<evidence type="ECO:0000255" key="5"/>
<evidence type="ECO:0000256" key="6">
    <source>
        <dbReference type="SAM" id="MobiDB-lite"/>
    </source>
</evidence>
<evidence type="ECO:0000305" key="7"/>
<accession>Q40578</accession>
<feature type="transit peptide" description="Mitochondrion" evidence="5">
    <location>
        <begin position="1"/>
        <end status="unknown"/>
    </location>
</feature>
<feature type="chain" id="PRO_0000001741" description="Ubiquinol oxidase 2, mitochondrial">
    <location>
        <begin status="unknown"/>
        <end position="297"/>
    </location>
</feature>
<feature type="transmembrane region" description="Helical" evidence="5">
    <location>
        <begin position="122"/>
        <end position="142"/>
    </location>
</feature>
<feature type="transmembrane region" description="Helical" evidence="5">
    <location>
        <begin position="184"/>
        <end position="204"/>
    </location>
</feature>
<feature type="region of interest" description="Disordered" evidence="6">
    <location>
        <begin position="17"/>
        <end position="43"/>
    </location>
</feature>
<feature type="binding site" evidence="2">
    <location>
        <position position="126"/>
    </location>
    <ligand>
        <name>Fe cation</name>
        <dbReference type="ChEBI" id="CHEBI:24875"/>
        <label>1</label>
    </ligand>
</feature>
<feature type="binding site" evidence="2">
    <location>
        <position position="165"/>
    </location>
    <ligand>
        <name>Fe cation</name>
        <dbReference type="ChEBI" id="CHEBI:24875"/>
        <label>1</label>
    </ligand>
</feature>
<feature type="binding site" evidence="2">
    <location>
        <position position="165"/>
    </location>
    <ligand>
        <name>Fe cation</name>
        <dbReference type="ChEBI" id="CHEBI:24875"/>
        <label>2</label>
    </ligand>
</feature>
<feature type="binding site" evidence="2">
    <location>
        <position position="168"/>
    </location>
    <ligand>
        <name>Fe cation</name>
        <dbReference type="ChEBI" id="CHEBI:24875"/>
        <label>1</label>
    </ligand>
</feature>
<feature type="binding site" evidence="2">
    <location>
        <position position="216"/>
    </location>
    <ligand>
        <name>Fe cation</name>
        <dbReference type="ChEBI" id="CHEBI:24875"/>
        <label>2</label>
    </ligand>
</feature>
<feature type="binding site" evidence="2">
    <location>
        <position position="267"/>
    </location>
    <ligand>
        <name>Fe cation</name>
        <dbReference type="ChEBI" id="CHEBI:24875"/>
        <label>1</label>
    </ligand>
</feature>
<feature type="binding site" evidence="2">
    <location>
        <position position="267"/>
    </location>
    <ligand>
        <name>Fe cation</name>
        <dbReference type="ChEBI" id="CHEBI:24875"/>
        <label>2</label>
    </ligand>
</feature>
<feature type="binding site" evidence="2">
    <location>
        <position position="270"/>
    </location>
    <ligand>
        <name>Fe cation</name>
        <dbReference type="ChEBI" id="CHEBI:24875"/>
        <label>2</label>
    </ligand>
</feature>
<feature type="disulfide bond" description="Interchain" evidence="4">
    <location>
        <position position="70"/>
    </location>
</feature>
<feature type="unsure residue">
    <location>
        <position position="209"/>
    </location>
</feature>
<sequence>MWVRHFPVMGPRSASTVALNDKQHDKKVENGGAAASGGGDGGDEKSVVSYWGVPPSKVTKEDGTEWKWNCFRPWETYKADLSIDLTKHHAPTTFLDKFAYWTVKALRYPTDIFFQRRYGCRAMMLETVAAVPGMVGGMLLHCKSLRRFEQSGGWIKALLEEAENERMHLMTFMEVAKPNWYERALVFAVQGVFINAYFVTYLLSPKLAHRIVGYLEEEAIHSYTEFLKELDKGNIENVPAPAIAIDYWRLPKDSTLRDVVLVVRADEAHHRDVNHFAPDIHYQGQQLKDSPAPIGYH</sequence>
<proteinExistence type="evidence at protein level"/>
<comment type="function">
    <text evidence="1">Catalyzes the cyanide-resistant oxidation of ubiquinol and the reduction of molecular oxygen to water, but does not translocate protons and consequently is not linked to oxidative phosphorylation. May increase respiration when the cytochrome respiratory pathway is restricted, or in response to low temperatures (By similarity).</text>
</comment>
<comment type="catalytic activity">
    <reaction>
        <text>2 a ubiquinol + O2 = 2 a ubiquinone + 2 H2O</text>
        <dbReference type="Rhea" id="RHEA:30255"/>
        <dbReference type="Rhea" id="RHEA-COMP:9565"/>
        <dbReference type="Rhea" id="RHEA-COMP:9566"/>
        <dbReference type="ChEBI" id="CHEBI:15377"/>
        <dbReference type="ChEBI" id="CHEBI:15379"/>
        <dbReference type="ChEBI" id="CHEBI:16389"/>
        <dbReference type="ChEBI" id="CHEBI:17976"/>
        <dbReference type="EC" id="1.10.3.11"/>
    </reaction>
</comment>
<comment type="cofactor">
    <cofactor evidence="3">
        <name>Fe cation</name>
        <dbReference type="ChEBI" id="CHEBI:24875"/>
    </cofactor>
    <text evidence="3">Binds 2 iron ions per subunit.</text>
</comment>
<comment type="subunit">
    <text evidence="7">Homodimer; disulfide-linked.</text>
</comment>
<comment type="subcellular location">
    <subcellularLocation>
        <location evidence="7">Mitochondrion inner membrane</location>
        <topology evidence="7">Multi-pass membrane protein</topology>
    </subcellularLocation>
    <text>Mitochondrial, possibly in the inner surface of the inner mitochondrial membrane.</text>
</comment>
<comment type="similarity">
    <text evidence="7">Belongs to the alternative oxidase family.</text>
</comment>